<comment type="function">
    <text evidence="1">Catalyzes the attachment of proline to tRNA(Pro) in a two-step reaction: proline is first activated by ATP to form Pro-AMP and then transferred to the acceptor end of tRNA(Pro). As ProRS can inadvertently accommodate and process non-cognate amino acids such as alanine and cysteine, to avoid such errors it has two additional distinct editing activities against alanine. One activity is designated as 'pretransfer' editing and involves the tRNA(Pro)-independent hydrolysis of activated Ala-AMP. The other activity is designated 'posttransfer' editing and involves deacylation of mischarged Ala-tRNA(Pro). The misacylated Cys-tRNA(Pro) is not edited by ProRS.</text>
</comment>
<comment type="catalytic activity">
    <reaction evidence="1">
        <text>tRNA(Pro) + L-proline + ATP = L-prolyl-tRNA(Pro) + AMP + diphosphate</text>
        <dbReference type="Rhea" id="RHEA:14305"/>
        <dbReference type="Rhea" id="RHEA-COMP:9700"/>
        <dbReference type="Rhea" id="RHEA-COMP:9702"/>
        <dbReference type="ChEBI" id="CHEBI:30616"/>
        <dbReference type="ChEBI" id="CHEBI:33019"/>
        <dbReference type="ChEBI" id="CHEBI:60039"/>
        <dbReference type="ChEBI" id="CHEBI:78442"/>
        <dbReference type="ChEBI" id="CHEBI:78532"/>
        <dbReference type="ChEBI" id="CHEBI:456215"/>
        <dbReference type="EC" id="6.1.1.15"/>
    </reaction>
</comment>
<comment type="subunit">
    <text evidence="1">Homodimer.</text>
</comment>
<comment type="subcellular location">
    <subcellularLocation>
        <location evidence="1">Cytoplasm</location>
    </subcellularLocation>
</comment>
<comment type="domain">
    <text evidence="1">Consists of three domains: the N-terminal catalytic domain, the editing domain and the C-terminal anticodon-binding domain.</text>
</comment>
<comment type="similarity">
    <text evidence="1">Belongs to the class-II aminoacyl-tRNA synthetase family. ProS type 1 subfamily.</text>
</comment>
<gene>
    <name evidence="1" type="primary">proS</name>
    <name type="ordered locus">LSL_0566</name>
</gene>
<name>SYP_LIGS1</name>
<evidence type="ECO:0000255" key="1">
    <source>
        <dbReference type="HAMAP-Rule" id="MF_01569"/>
    </source>
</evidence>
<feature type="chain" id="PRO_0000248709" description="Proline--tRNA ligase">
    <location>
        <begin position="1"/>
        <end position="571"/>
    </location>
</feature>
<organism>
    <name type="scientific">Ligilactobacillus salivarius (strain UCC118)</name>
    <name type="common">Lactobacillus salivarius</name>
    <dbReference type="NCBI Taxonomy" id="362948"/>
    <lineage>
        <taxon>Bacteria</taxon>
        <taxon>Bacillati</taxon>
        <taxon>Bacillota</taxon>
        <taxon>Bacilli</taxon>
        <taxon>Lactobacillales</taxon>
        <taxon>Lactobacillaceae</taxon>
        <taxon>Ligilactobacillus</taxon>
    </lineage>
</organism>
<accession>Q1WUG0</accession>
<keyword id="KW-0030">Aminoacyl-tRNA synthetase</keyword>
<keyword id="KW-0067">ATP-binding</keyword>
<keyword id="KW-0963">Cytoplasm</keyword>
<keyword id="KW-0436">Ligase</keyword>
<keyword id="KW-0547">Nucleotide-binding</keyword>
<keyword id="KW-0648">Protein biosynthesis</keyword>
<keyword id="KW-1185">Reference proteome</keyword>
<proteinExistence type="inferred from homology"/>
<protein>
    <recommendedName>
        <fullName evidence="1">Proline--tRNA ligase</fullName>
        <ecNumber evidence="1">6.1.1.15</ecNumber>
    </recommendedName>
    <alternativeName>
        <fullName evidence="1">Prolyl-tRNA synthetase</fullName>
        <shortName evidence="1">ProRS</shortName>
    </alternativeName>
</protein>
<dbReference type="EC" id="6.1.1.15" evidence="1"/>
<dbReference type="EMBL" id="CP000233">
    <property type="protein sequence ID" value="ABD99375.1"/>
    <property type="molecule type" value="Genomic_DNA"/>
</dbReference>
<dbReference type="RefSeq" id="WP_011475821.1">
    <property type="nucleotide sequence ID" value="NC_007929.1"/>
</dbReference>
<dbReference type="RefSeq" id="YP_535458.1">
    <property type="nucleotide sequence ID" value="NC_007929.1"/>
</dbReference>
<dbReference type="SMR" id="Q1WUG0"/>
<dbReference type="STRING" id="362948.LSL_0566"/>
<dbReference type="KEGG" id="lsl:LSL_0566"/>
<dbReference type="PATRIC" id="fig|362948.14.peg.645"/>
<dbReference type="HOGENOM" id="CLU_016739_0_0_9"/>
<dbReference type="OrthoDB" id="9809052at2"/>
<dbReference type="Proteomes" id="UP000006559">
    <property type="component" value="Chromosome"/>
</dbReference>
<dbReference type="GO" id="GO:0005829">
    <property type="term" value="C:cytosol"/>
    <property type="evidence" value="ECO:0007669"/>
    <property type="project" value="TreeGrafter"/>
</dbReference>
<dbReference type="GO" id="GO:0002161">
    <property type="term" value="F:aminoacyl-tRNA deacylase activity"/>
    <property type="evidence" value="ECO:0007669"/>
    <property type="project" value="InterPro"/>
</dbReference>
<dbReference type="GO" id="GO:0005524">
    <property type="term" value="F:ATP binding"/>
    <property type="evidence" value="ECO:0007669"/>
    <property type="project" value="UniProtKB-UniRule"/>
</dbReference>
<dbReference type="GO" id="GO:0140096">
    <property type="term" value="F:catalytic activity, acting on a protein"/>
    <property type="evidence" value="ECO:0007669"/>
    <property type="project" value="UniProtKB-ARBA"/>
</dbReference>
<dbReference type="GO" id="GO:0004827">
    <property type="term" value="F:proline-tRNA ligase activity"/>
    <property type="evidence" value="ECO:0007669"/>
    <property type="project" value="UniProtKB-UniRule"/>
</dbReference>
<dbReference type="GO" id="GO:0016740">
    <property type="term" value="F:transferase activity"/>
    <property type="evidence" value="ECO:0007669"/>
    <property type="project" value="UniProtKB-ARBA"/>
</dbReference>
<dbReference type="GO" id="GO:0006433">
    <property type="term" value="P:prolyl-tRNA aminoacylation"/>
    <property type="evidence" value="ECO:0007669"/>
    <property type="project" value="UniProtKB-UniRule"/>
</dbReference>
<dbReference type="CDD" id="cd04334">
    <property type="entry name" value="ProRS-INS"/>
    <property type="match status" value="1"/>
</dbReference>
<dbReference type="CDD" id="cd00861">
    <property type="entry name" value="ProRS_anticodon_short"/>
    <property type="match status" value="1"/>
</dbReference>
<dbReference type="CDD" id="cd00779">
    <property type="entry name" value="ProRS_core_prok"/>
    <property type="match status" value="1"/>
</dbReference>
<dbReference type="FunFam" id="3.30.930.10:FF:000062">
    <property type="entry name" value="Proline--tRNA ligase"/>
    <property type="match status" value="1"/>
</dbReference>
<dbReference type="FunFam" id="3.30.930.10:FF:000066">
    <property type="entry name" value="Proline--tRNA ligase"/>
    <property type="match status" value="1"/>
</dbReference>
<dbReference type="FunFam" id="3.40.50.800:FF:000011">
    <property type="entry name" value="Proline--tRNA ligase"/>
    <property type="match status" value="1"/>
</dbReference>
<dbReference type="Gene3D" id="3.40.50.800">
    <property type="entry name" value="Anticodon-binding domain"/>
    <property type="match status" value="1"/>
</dbReference>
<dbReference type="Gene3D" id="3.30.930.10">
    <property type="entry name" value="Bira Bifunctional Protein, Domain 2"/>
    <property type="match status" value="2"/>
</dbReference>
<dbReference type="HAMAP" id="MF_01569">
    <property type="entry name" value="Pro_tRNA_synth_type1"/>
    <property type="match status" value="1"/>
</dbReference>
<dbReference type="InterPro" id="IPR002314">
    <property type="entry name" value="aa-tRNA-synt_IIb"/>
</dbReference>
<dbReference type="InterPro" id="IPR006195">
    <property type="entry name" value="aa-tRNA-synth_II"/>
</dbReference>
<dbReference type="InterPro" id="IPR045864">
    <property type="entry name" value="aa-tRNA-synth_II/BPL/LPL"/>
</dbReference>
<dbReference type="InterPro" id="IPR004154">
    <property type="entry name" value="Anticodon-bd"/>
</dbReference>
<dbReference type="InterPro" id="IPR036621">
    <property type="entry name" value="Anticodon-bd_dom_sf"/>
</dbReference>
<dbReference type="InterPro" id="IPR002316">
    <property type="entry name" value="Pro-tRNA-ligase_IIa"/>
</dbReference>
<dbReference type="InterPro" id="IPR004500">
    <property type="entry name" value="Pro-tRNA-synth_IIa_bac-type"/>
</dbReference>
<dbReference type="InterPro" id="IPR023717">
    <property type="entry name" value="Pro-tRNA-Synthase_IIa_type1"/>
</dbReference>
<dbReference type="InterPro" id="IPR050062">
    <property type="entry name" value="Pro-tRNA_synthetase"/>
</dbReference>
<dbReference type="InterPro" id="IPR044140">
    <property type="entry name" value="ProRS_anticodon_short"/>
</dbReference>
<dbReference type="InterPro" id="IPR033730">
    <property type="entry name" value="ProRS_core_prok"/>
</dbReference>
<dbReference type="InterPro" id="IPR036754">
    <property type="entry name" value="YbaK/aa-tRNA-synt-asso_dom_sf"/>
</dbReference>
<dbReference type="InterPro" id="IPR007214">
    <property type="entry name" value="YbaK/aa-tRNA-synth-assoc-dom"/>
</dbReference>
<dbReference type="NCBIfam" id="NF006625">
    <property type="entry name" value="PRK09194.1"/>
    <property type="match status" value="1"/>
</dbReference>
<dbReference type="NCBIfam" id="TIGR00409">
    <property type="entry name" value="proS_fam_II"/>
    <property type="match status" value="1"/>
</dbReference>
<dbReference type="PANTHER" id="PTHR42753">
    <property type="entry name" value="MITOCHONDRIAL RIBOSOME PROTEIN L39/PROLYL-TRNA LIGASE FAMILY MEMBER"/>
    <property type="match status" value="1"/>
</dbReference>
<dbReference type="PANTHER" id="PTHR42753:SF2">
    <property type="entry name" value="PROLINE--TRNA LIGASE"/>
    <property type="match status" value="1"/>
</dbReference>
<dbReference type="Pfam" id="PF03129">
    <property type="entry name" value="HGTP_anticodon"/>
    <property type="match status" value="1"/>
</dbReference>
<dbReference type="Pfam" id="PF00587">
    <property type="entry name" value="tRNA-synt_2b"/>
    <property type="match status" value="1"/>
</dbReference>
<dbReference type="Pfam" id="PF04073">
    <property type="entry name" value="tRNA_edit"/>
    <property type="match status" value="1"/>
</dbReference>
<dbReference type="PRINTS" id="PR01046">
    <property type="entry name" value="TRNASYNTHPRO"/>
</dbReference>
<dbReference type="SUPFAM" id="SSF52954">
    <property type="entry name" value="Class II aaRS ABD-related"/>
    <property type="match status" value="1"/>
</dbReference>
<dbReference type="SUPFAM" id="SSF55681">
    <property type="entry name" value="Class II aaRS and biotin synthetases"/>
    <property type="match status" value="1"/>
</dbReference>
<dbReference type="SUPFAM" id="SSF55826">
    <property type="entry name" value="YbaK/ProRS associated domain"/>
    <property type="match status" value="1"/>
</dbReference>
<dbReference type="PROSITE" id="PS50862">
    <property type="entry name" value="AA_TRNA_LIGASE_II"/>
    <property type="match status" value="1"/>
</dbReference>
<sequence length="571" mass="64426">MKQSQMLIPTLKEIPSDAEVVSHQLMLRGGYIKQITAGMYAYLPLAYRVMKKIENIIREEMDRIDAVEMLVPAVVPAELWQESGRYETYGPTLFKLKDRHERDFILGPTHEETFTTIVRDAIKSYKKLPLYLYQIQMKYRDENRPRFGLLRGREFLMLDGYSFHVDDASMEKVFNDTDKAYQRIFERCGLDFRGIIADSGAMGGNRSKEFQAIAEVGEDTIAYSDSSDYAANIEMAKNLRIPKQSHETPKDLEKVATPNAKTIVEVAEFLGTDTQNEIKTLLFIADDEPVVVLMRGIDEVNEVKLKNHLGAIDLRPAEEEEAVKFLGANFGSLGPVGIDENLKVLADLDVEGMINASVGANEDGYHYINVNIDRDYHVDEFLDLREVREGELSPDGEGVLKFTRGIEIGHIFQLGTRYSESLGADVLDENGRQVPMRMGCYGIGVSRLLSAIVEQHNDENGIAWPREIAPFDIHVVPVNVKNDTQRELSEKVTAMLEDAGYQVLVDDRKERAGVKFADSDLIGLPIRITVGKKADEGIVEIKLRQNGEKIEVKLEELLNSVKILFNETITD</sequence>
<reference key="1">
    <citation type="journal article" date="2006" name="Proc. Natl. Acad. Sci. U.S.A.">
        <title>Multireplicon genome architecture of Lactobacillus salivarius.</title>
        <authorList>
            <person name="Claesson M.J."/>
            <person name="Li Y."/>
            <person name="Leahy S."/>
            <person name="Canchaya C."/>
            <person name="van Pijkeren J.P."/>
            <person name="Cerdeno-Tarraga A.M."/>
            <person name="Parkhill J."/>
            <person name="Flynn S."/>
            <person name="O'Sullivan G.C."/>
            <person name="Collins J.K."/>
            <person name="Higgins D."/>
            <person name="Shanahan F."/>
            <person name="Fitzgerald G.F."/>
            <person name="van Sinderen D."/>
            <person name="O'Toole P.W."/>
        </authorList>
    </citation>
    <scope>NUCLEOTIDE SEQUENCE [LARGE SCALE GENOMIC DNA]</scope>
    <source>
        <strain>UCC118</strain>
    </source>
</reference>